<evidence type="ECO:0000255" key="1">
    <source>
        <dbReference type="HAMAP-Rule" id="MF_00815"/>
    </source>
</evidence>
<sequence length="298" mass="31979">MASLKALRGRITSVKSTQKITSAMKMVAASKLRRAQQAAEAARPYAELMQRMLAALADNVAGSPSAPRILVGTGQDKVHLLVVISADRGLAGAFNTNVGRAARTLANRLESEGKTVKILTVGRKARDYLRRDLETRLLPETSLAGKKVLAFADALALSQQITARLDAGEFDVCTLVYNHFNSVISQTPGETQLIPAQVPQAAPADAGASSNGAKAVYEFEPDEETLLAKLLPQNLAIQIYRAILESAAGEHAARMTAMDNATRNAGDMIKRLSLTYNRTRQANITRELIEIISGAEAL</sequence>
<reference key="1">
    <citation type="journal article" date="2007" name="J. Bacteriol.">
        <title>Genome sequence analysis of the emerging human pathogenic acetic acid bacterium Granulibacter bethesdensis.</title>
        <authorList>
            <person name="Greenberg D.E."/>
            <person name="Porcella S.F."/>
            <person name="Zelazny A.M."/>
            <person name="Virtaneva K."/>
            <person name="Sturdevant D.E."/>
            <person name="Kupko J.J. III"/>
            <person name="Barbian K.D."/>
            <person name="Babar A."/>
            <person name="Dorward D.W."/>
            <person name="Holland S.M."/>
        </authorList>
    </citation>
    <scope>NUCLEOTIDE SEQUENCE [LARGE SCALE GENOMIC DNA]</scope>
    <source>
        <strain>ATCC BAA-1260 / CGDNIH1</strain>
    </source>
</reference>
<feature type="chain" id="PRO_1000053219" description="ATP synthase gamma chain">
    <location>
        <begin position="1"/>
        <end position="298"/>
    </location>
</feature>
<gene>
    <name evidence="1" type="primary">atpG</name>
    <name type="ordered locus">GbCGDNIH1_2057</name>
</gene>
<protein>
    <recommendedName>
        <fullName evidence="1">ATP synthase gamma chain</fullName>
    </recommendedName>
    <alternativeName>
        <fullName evidence="1">ATP synthase F1 sector gamma subunit</fullName>
    </alternativeName>
    <alternativeName>
        <fullName evidence="1">F-ATPase gamma subunit</fullName>
    </alternativeName>
</protein>
<accession>Q0BQE7</accession>
<proteinExistence type="inferred from homology"/>
<organism>
    <name type="scientific">Granulibacter bethesdensis (strain ATCC BAA-1260 / CGDNIH1)</name>
    <dbReference type="NCBI Taxonomy" id="391165"/>
    <lineage>
        <taxon>Bacteria</taxon>
        <taxon>Pseudomonadati</taxon>
        <taxon>Pseudomonadota</taxon>
        <taxon>Alphaproteobacteria</taxon>
        <taxon>Acetobacterales</taxon>
        <taxon>Acetobacteraceae</taxon>
        <taxon>Granulibacter</taxon>
    </lineage>
</organism>
<name>ATPG_GRABC</name>
<keyword id="KW-0066">ATP synthesis</keyword>
<keyword id="KW-0997">Cell inner membrane</keyword>
<keyword id="KW-1003">Cell membrane</keyword>
<keyword id="KW-0139">CF(1)</keyword>
<keyword id="KW-0375">Hydrogen ion transport</keyword>
<keyword id="KW-0406">Ion transport</keyword>
<keyword id="KW-0472">Membrane</keyword>
<keyword id="KW-1185">Reference proteome</keyword>
<keyword id="KW-0813">Transport</keyword>
<dbReference type="EMBL" id="CP000394">
    <property type="protein sequence ID" value="ABI62955.1"/>
    <property type="molecule type" value="Genomic_DNA"/>
</dbReference>
<dbReference type="RefSeq" id="WP_011632757.1">
    <property type="nucleotide sequence ID" value="NC_008343.2"/>
</dbReference>
<dbReference type="SMR" id="Q0BQE7"/>
<dbReference type="STRING" id="391165.GbCGDNIH1_2057"/>
<dbReference type="GeneID" id="69746625"/>
<dbReference type="KEGG" id="gbe:GbCGDNIH1_2057"/>
<dbReference type="eggNOG" id="COG0224">
    <property type="taxonomic scope" value="Bacteria"/>
</dbReference>
<dbReference type="HOGENOM" id="CLU_050669_0_1_5"/>
<dbReference type="OrthoDB" id="9812769at2"/>
<dbReference type="Proteomes" id="UP000001963">
    <property type="component" value="Chromosome"/>
</dbReference>
<dbReference type="GO" id="GO:0005886">
    <property type="term" value="C:plasma membrane"/>
    <property type="evidence" value="ECO:0007669"/>
    <property type="project" value="UniProtKB-SubCell"/>
</dbReference>
<dbReference type="GO" id="GO:0045259">
    <property type="term" value="C:proton-transporting ATP synthase complex"/>
    <property type="evidence" value="ECO:0007669"/>
    <property type="project" value="UniProtKB-KW"/>
</dbReference>
<dbReference type="GO" id="GO:0005524">
    <property type="term" value="F:ATP binding"/>
    <property type="evidence" value="ECO:0007669"/>
    <property type="project" value="UniProtKB-UniRule"/>
</dbReference>
<dbReference type="GO" id="GO:0046933">
    <property type="term" value="F:proton-transporting ATP synthase activity, rotational mechanism"/>
    <property type="evidence" value="ECO:0007669"/>
    <property type="project" value="UniProtKB-UniRule"/>
</dbReference>
<dbReference type="GO" id="GO:0042777">
    <property type="term" value="P:proton motive force-driven plasma membrane ATP synthesis"/>
    <property type="evidence" value="ECO:0007669"/>
    <property type="project" value="UniProtKB-UniRule"/>
</dbReference>
<dbReference type="CDD" id="cd12151">
    <property type="entry name" value="F1-ATPase_gamma"/>
    <property type="match status" value="1"/>
</dbReference>
<dbReference type="FunFam" id="1.10.287.80:FF:000001">
    <property type="entry name" value="ATP synthase gamma chain"/>
    <property type="match status" value="1"/>
</dbReference>
<dbReference type="Gene3D" id="3.40.1380.10">
    <property type="match status" value="1"/>
</dbReference>
<dbReference type="Gene3D" id="1.10.287.80">
    <property type="entry name" value="ATP synthase, gamma subunit, helix hairpin domain"/>
    <property type="match status" value="1"/>
</dbReference>
<dbReference type="HAMAP" id="MF_00815">
    <property type="entry name" value="ATP_synth_gamma_bact"/>
    <property type="match status" value="1"/>
</dbReference>
<dbReference type="InterPro" id="IPR035968">
    <property type="entry name" value="ATP_synth_F1_ATPase_gsu"/>
</dbReference>
<dbReference type="InterPro" id="IPR000131">
    <property type="entry name" value="ATP_synth_F1_gsu"/>
</dbReference>
<dbReference type="InterPro" id="IPR023632">
    <property type="entry name" value="ATP_synth_F1_gsu_CS"/>
</dbReference>
<dbReference type="NCBIfam" id="TIGR01146">
    <property type="entry name" value="ATPsyn_F1gamma"/>
    <property type="match status" value="1"/>
</dbReference>
<dbReference type="NCBIfam" id="NF004146">
    <property type="entry name" value="PRK05621.1-4"/>
    <property type="match status" value="1"/>
</dbReference>
<dbReference type="PANTHER" id="PTHR11693">
    <property type="entry name" value="ATP SYNTHASE GAMMA CHAIN"/>
    <property type="match status" value="1"/>
</dbReference>
<dbReference type="PANTHER" id="PTHR11693:SF22">
    <property type="entry name" value="ATP SYNTHASE SUBUNIT GAMMA, MITOCHONDRIAL"/>
    <property type="match status" value="1"/>
</dbReference>
<dbReference type="Pfam" id="PF00231">
    <property type="entry name" value="ATP-synt"/>
    <property type="match status" value="1"/>
</dbReference>
<dbReference type="PIRSF" id="PIRSF039089">
    <property type="entry name" value="ATP_synthase_gamma"/>
    <property type="match status" value="1"/>
</dbReference>
<dbReference type="PRINTS" id="PR00126">
    <property type="entry name" value="ATPASEGAMMA"/>
</dbReference>
<dbReference type="SUPFAM" id="SSF52943">
    <property type="entry name" value="ATP synthase (F1-ATPase), gamma subunit"/>
    <property type="match status" value="1"/>
</dbReference>
<dbReference type="PROSITE" id="PS00153">
    <property type="entry name" value="ATPASE_GAMMA"/>
    <property type="match status" value="1"/>
</dbReference>
<comment type="function">
    <text evidence="1">Produces ATP from ADP in the presence of a proton gradient across the membrane. The gamma chain is believed to be important in regulating ATPase activity and the flow of protons through the CF(0) complex.</text>
</comment>
<comment type="subunit">
    <text evidence="1">F-type ATPases have 2 components, CF(1) - the catalytic core - and CF(0) - the membrane proton channel. CF(1) has five subunits: alpha(3), beta(3), gamma(1), delta(1), epsilon(1). CF(0) has three main subunits: a, b and c.</text>
</comment>
<comment type="subcellular location">
    <subcellularLocation>
        <location evidence="1">Cell inner membrane</location>
        <topology evidence="1">Peripheral membrane protein</topology>
    </subcellularLocation>
</comment>
<comment type="similarity">
    <text evidence="1">Belongs to the ATPase gamma chain family.</text>
</comment>